<organism>
    <name type="scientific">Saccharomyces cerevisiae (strain Lalvin EC1118 / Prise de mousse)</name>
    <name type="common">Baker's yeast</name>
    <dbReference type="NCBI Taxonomy" id="643680"/>
    <lineage>
        <taxon>Eukaryota</taxon>
        <taxon>Fungi</taxon>
        <taxon>Dikarya</taxon>
        <taxon>Ascomycota</taxon>
        <taxon>Saccharomycotina</taxon>
        <taxon>Saccharomycetes</taxon>
        <taxon>Saccharomycetales</taxon>
        <taxon>Saccharomycetaceae</taxon>
        <taxon>Saccharomyces</taxon>
    </lineage>
</organism>
<accession>C8Z7W7</accession>
<reference key="1">
    <citation type="journal article" date="2009" name="Proc. Natl. Acad. Sci. U.S.A.">
        <title>Eukaryote-to-eukaryote gene transfer events revealed by the genome sequence of the wine yeast Saccharomyces cerevisiae EC1118.</title>
        <authorList>
            <person name="Novo M."/>
            <person name="Bigey F."/>
            <person name="Beyne E."/>
            <person name="Galeote V."/>
            <person name="Gavory F."/>
            <person name="Mallet S."/>
            <person name="Cambon B."/>
            <person name="Legras J.-L."/>
            <person name="Wincker P."/>
            <person name="Casaregola S."/>
            <person name="Dequin S."/>
        </authorList>
    </citation>
    <scope>NUCLEOTIDE SEQUENCE [LARGE SCALE GENOMIC DNA]</scope>
    <source>
        <strain>Lalvin EC1118 / Prise de mousse</strain>
    </source>
</reference>
<protein>
    <recommendedName>
        <fullName>Regulator of rDNA transcription protein 5</fullName>
    </recommendedName>
</protein>
<evidence type="ECO:0000250" key="1"/>
<evidence type="ECO:0000255" key="2">
    <source>
        <dbReference type="PROSITE-ProRule" id="PRU00176"/>
    </source>
</evidence>
<evidence type="ECO:0000256" key="3">
    <source>
        <dbReference type="SAM" id="MobiDB-lite"/>
    </source>
</evidence>
<evidence type="ECO:0000305" key="4"/>
<feature type="chain" id="PRO_0000404365" description="Regulator of rDNA transcription protein 5">
    <location>
        <begin position="1"/>
        <end position="291"/>
    </location>
</feature>
<feature type="domain" description="RRM" evidence="2">
    <location>
        <begin position="18"/>
        <end position="105"/>
    </location>
</feature>
<feature type="region of interest" description="Disordered" evidence="3">
    <location>
        <begin position="235"/>
        <end position="291"/>
    </location>
</feature>
<feature type="compositionally biased region" description="Pro residues" evidence="3">
    <location>
        <begin position="239"/>
        <end position="257"/>
    </location>
</feature>
<dbReference type="EMBL" id="FN393068">
    <property type="protein sequence ID" value="CAY79483.1"/>
    <property type="molecule type" value="Genomic_DNA"/>
</dbReference>
<dbReference type="HOGENOM" id="CLU_042558_0_0_1"/>
<dbReference type="OrthoDB" id="7402at4893"/>
<dbReference type="Proteomes" id="UP000000286">
    <property type="component" value="Chromosome VI, Scaffold EC1118_1F14"/>
</dbReference>
<dbReference type="GO" id="GO:0005737">
    <property type="term" value="C:cytoplasm"/>
    <property type="evidence" value="ECO:0007669"/>
    <property type="project" value="TreeGrafter"/>
</dbReference>
<dbReference type="GO" id="GO:0005634">
    <property type="term" value="C:nucleus"/>
    <property type="evidence" value="ECO:0007669"/>
    <property type="project" value="TreeGrafter"/>
</dbReference>
<dbReference type="GO" id="GO:1990904">
    <property type="term" value="C:ribonucleoprotein complex"/>
    <property type="evidence" value="ECO:0007669"/>
    <property type="project" value="TreeGrafter"/>
</dbReference>
<dbReference type="GO" id="GO:0003729">
    <property type="term" value="F:mRNA binding"/>
    <property type="evidence" value="ECO:0007669"/>
    <property type="project" value="TreeGrafter"/>
</dbReference>
<dbReference type="CDD" id="cd12409">
    <property type="entry name" value="RRM1_RRT5"/>
    <property type="match status" value="1"/>
</dbReference>
<dbReference type="CDD" id="cd12410">
    <property type="entry name" value="RRM2_RRT5"/>
    <property type="match status" value="1"/>
</dbReference>
<dbReference type="FunFam" id="3.30.70.330:FF:000964">
    <property type="entry name" value="Regulator of rDNA transcription protein 5"/>
    <property type="match status" value="1"/>
</dbReference>
<dbReference type="Gene3D" id="3.30.70.330">
    <property type="match status" value="1"/>
</dbReference>
<dbReference type="InterPro" id="IPR012677">
    <property type="entry name" value="Nucleotide-bd_a/b_plait_sf"/>
</dbReference>
<dbReference type="InterPro" id="IPR035979">
    <property type="entry name" value="RBD_domain_sf"/>
</dbReference>
<dbReference type="InterPro" id="IPR000504">
    <property type="entry name" value="RRM_dom"/>
</dbReference>
<dbReference type="InterPro" id="IPR034244">
    <property type="entry name" value="Rrt5_RRM1"/>
</dbReference>
<dbReference type="InterPro" id="IPR034247">
    <property type="entry name" value="Rrt5_RRM2"/>
</dbReference>
<dbReference type="InterPro" id="IPR050374">
    <property type="entry name" value="RRT5_SRSF_SR"/>
</dbReference>
<dbReference type="PANTHER" id="PTHR23003:SF54">
    <property type="entry name" value="REGULATOR OF RDNA TRANSCRIPTION PROTEIN 5"/>
    <property type="match status" value="1"/>
</dbReference>
<dbReference type="PANTHER" id="PTHR23003">
    <property type="entry name" value="RNA RECOGNITION MOTIF RRM DOMAIN CONTAINING PROTEIN"/>
    <property type="match status" value="1"/>
</dbReference>
<dbReference type="Pfam" id="PF00076">
    <property type="entry name" value="RRM_1"/>
    <property type="match status" value="1"/>
</dbReference>
<dbReference type="SMART" id="SM00360">
    <property type="entry name" value="RRM"/>
    <property type="match status" value="1"/>
</dbReference>
<dbReference type="SUPFAM" id="SSF54928">
    <property type="entry name" value="RNA-binding domain, RBD"/>
    <property type="match status" value="2"/>
</dbReference>
<dbReference type="PROSITE" id="PS50102">
    <property type="entry name" value="RRM"/>
    <property type="match status" value="1"/>
</dbReference>
<sequence>MTEQVNSDTTSDTTTTITTVYISNLPFTASERDLHAFLNNYGASSVLIPTQTVRRFSKRHNSNPRKPLGIAFAQFANNTLALKAIQDLNGTVFQNQKLFLKLHVPYEADSTPDTDVKKPKEKNKVKKTPETAADTVYCHDLPDDITDSEIRELFQLYSPQEIWIYRSKVYRRKCIPFAPHQITAALVTLQSETPIGDICDSVAKTATLRGKSIIVKPAYVSKIQEIKQLVKDNLTNARDPPPAALAEPAPAPAPAPVEPAEQVQEGQDNAETNDVPPPPASSSDRPTVAAA</sequence>
<comment type="function">
    <text evidence="1">May be involved in the modulation of rDNA transcription.</text>
</comment>
<comment type="similarity">
    <text evidence="4">Belongs to the RRT5 family.</text>
</comment>
<keyword id="KW-0694">RNA-binding</keyword>
<keyword id="KW-0804">Transcription</keyword>
<keyword id="KW-0805">Transcription regulation</keyword>
<gene>
    <name type="primary">RRT5</name>
    <name type="ORF">EC1118_1F14_1288g</name>
</gene>
<name>RRT5_YEAS8</name>
<proteinExistence type="inferred from homology"/>